<comment type="function">
    <text evidence="1">Forms part of the ribosomal stalk, playing a central role in the interaction of the ribosome with GTP-bound translation factors.</text>
</comment>
<comment type="subunit">
    <text evidence="1">Part of the ribosomal stalk of the 50S ribosomal subunit. The N-terminus interacts with L11 and the large rRNA to form the base of the stalk. The C-terminus forms an elongated spine to which L12 dimers bind in a sequential fashion forming a multimeric L10(L12)X complex.</text>
</comment>
<comment type="similarity">
    <text evidence="1">Belongs to the universal ribosomal protein uL10 family.</text>
</comment>
<evidence type="ECO:0000255" key="1">
    <source>
        <dbReference type="HAMAP-Rule" id="MF_00362"/>
    </source>
</evidence>
<evidence type="ECO:0000305" key="2"/>
<proteinExistence type="inferred from homology"/>
<reference key="1">
    <citation type="journal article" date="2010" name="J. Bacteriol.">
        <title>Genome sequence of the Fleming strain of Micrococcus luteus, a simple free-living actinobacterium.</title>
        <authorList>
            <person name="Young M."/>
            <person name="Artsatbanov V."/>
            <person name="Beller H.R."/>
            <person name="Chandra G."/>
            <person name="Chater K.F."/>
            <person name="Dover L.G."/>
            <person name="Goh E.B."/>
            <person name="Kahan T."/>
            <person name="Kaprelyants A.S."/>
            <person name="Kyrpides N."/>
            <person name="Lapidus A."/>
            <person name="Lowry S.R."/>
            <person name="Lykidis A."/>
            <person name="Mahillon J."/>
            <person name="Markowitz V."/>
            <person name="Mavromatis K."/>
            <person name="Mukamolova G.V."/>
            <person name="Oren A."/>
            <person name="Rokem J.S."/>
            <person name="Smith M.C."/>
            <person name="Young D.I."/>
            <person name="Greenblatt C.L."/>
        </authorList>
    </citation>
    <scope>NUCLEOTIDE SEQUENCE [LARGE SCALE GENOMIC DNA]</scope>
    <source>
        <strain>ATCC 4698 / DSM 20030 / JCM 1464 / CCM 169 / CCUG 5858 / IAM 1056 / NBRC 3333 / NCIMB 9278 / NCTC 2665 / VKM Ac-2230</strain>
    </source>
</reference>
<gene>
    <name evidence="1" type="primary">rplJ</name>
    <name type="ordered locus">Mlut_17270</name>
</gene>
<accession>C5CC73</accession>
<organism>
    <name type="scientific">Micrococcus luteus (strain ATCC 4698 / DSM 20030 / JCM 1464 / CCM 169 / CCUG 5858 / IAM 1056 / NBRC 3333 / NCIMB 9278 / NCTC 2665 / VKM Ac-2230)</name>
    <name type="common">Micrococcus lysodeikticus</name>
    <dbReference type="NCBI Taxonomy" id="465515"/>
    <lineage>
        <taxon>Bacteria</taxon>
        <taxon>Bacillati</taxon>
        <taxon>Actinomycetota</taxon>
        <taxon>Actinomycetes</taxon>
        <taxon>Micrococcales</taxon>
        <taxon>Micrococcaceae</taxon>
        <taxon>Micrococcus</taxon>
    </lineage>
</organism>
<name>RL10_MICLC</name>
<protein>
    <recommendedName>
        <fullName evidence="1">Large ribosomal subunit protein uL10</fullName>
    </recommendedName>
    <alternativeName>
        <fullName evidence="2">50S ribosomal protein L10</fullName>
    </alternativeName>
</protein>
<feature type="chain" id="PRO_1000205447" description="Large ribosomal subunit protein uL10">
    <location>
        <begin position="1"/>
        <end position="173"/>
    </location>
</feature>
<sequence>MATSAKESAVAELTDLFRESSAAVLTEYRGLTVTELKQLRDSIRQDATYAVAKNTLAEIAAKDAGLEGLEAHLSGPTAIAFVTGDPVNVAKALRDFAKDHEKLVLKGGYMDGQPLDEAGIKKLADLESREVLLAKFAGAMKGSMSKAAALFQAPLSKTVRTVEALRAAQGEAA</sequence>
<dbReference type="EMBL" id="CP001628">
    <property type="protein sequence ID" value="ACS31214.1"/>
    <property type="molecule type" value="Genomic_DNA"/>
</dbReference>
<dbReference type="RefSeq" id="WP_002854782.1">
    <property type="nucleotide sequence ID" value="NZ_WBMF01000001.1"/>
</dbReference>
<dbReference type="SMR" id="C5CC73"/>
<dbReference type="STRING" id="465515.Mlut_17270"/>
<dbReference type="EnsemblBacteria" id="ACS31214">
    <property type="protein sequence ID" value="ACS31214"/>
    <property type="gene ID" value="Mlut_17270"/>
</dbReference>
<dbReference type="GeneID" id="93364259"/>
<dbReference type="KEGG" id="mlu:Mlut_17270"/>
<dbReference type="eggNOG" id="COG0244">
    <property type="taxonomic scope" value="Bacteria"/>
</dbReference>
<dbReference type="HOGENOM" id="CLU_092227_1_0_11"/>
<dbReference type="Proteomes" id="UP000000738">
    <property type="component" value="Chromosome"/>
</dbReference>
<dbReference type="GO" id="GO:0015934">
    <property type="term" value="C:large ribosomal subunit"/>
    <property type="evidence" value="ECO:0007669"/>
    <property type="project" value="InterPro"/>
</dbReference>
<dbReference type="GO" id="GO:0070180">
    <property type="term" value="F:large ribosomal subunit rRNA binding"/>
    <property type="evidence" value="ECO:0007669"/>
    <property type="project" value="UniProtKB-UniRule"/>
</dbReference>
<dbReference type="GO" id="GO:0003735">
    <property type="term" value="F:structural constituent of ribosome"/>
    <property type="evidence" value="ECO:0007669"/>
    <property type="project" value="InterPro"/>
</dbReference>
<dbReference type="GO" id="GO:0006412">
    <property type="term" value="P:translation"/>
    <property type="evidence" value="ECO:0007669"/>
    <property type="project" value="UniProtKB-UniRule"/>
</dbReference>
<dbReference type="CDD" id="cd05797">
    <property type="entry name" value="Ribosomal_L10"/>
    <property type="match status" value="1"/>
</dbReference>
<dbReference type="Gene3D" id="3.30.70.1730">
    <property type="match status" value="1"/>
</dbReference>
<dbReference type="Gene3D" id="6.10.250.290">
    <property type="match status" value="1"/>
</dbReference>
<dbReference type="HAMAP" id="MF_00362">
    <property type="entry name" value="Ribosomal_uL10"/>
    <property type="match status" value="1"/>
</dbReference>
<dbReference type="InterPro" id="IPR001790">
    <property type="entry name" value="Ribosomal_uL10"/>
</dbReference>
<dbReference type="InterPro" id="IPR043141">
    <property type="entry name" value="Ribosomal_uL10-like_sf"/>
</dbReference>
<dbReference type="InterPro" id="IPR022973">
    <property type="entry name" value="Ribosomal_uL10_bac"/>
</dbReference>
<dbReference type="InterPro" id="IPR047865">
    <property type="entry name" value="Ribosomal_uL10_bac_type"/>
</dbReference>
<dbReference type="InterPro" id="IPR002363">
    <property type="entry name" value="Ribosomal_uL10_CS_bac"/>
</dbReference>
<dbReference type="NCBIfam" id="NF000955">
    <property type="entry name" value="PRK00099.1-1"/>
    <property type="match status" value="1"/>
</dbReference>
<dbReference type="PANTHER" id="PTHR11560">
    <property type="entry name" value="39S RIBOSOMAL PROTEIN L10, MITOCHONDRIAL"/>
    <property type="match status" value="1"/>
</dbReference>
<dbReference type="Pfam" id="PF00466">
    <property type="entry name" value="Ribosomal_L10"/>
    <property type="match status" value="1"/>
</dbReference>
<dbReference type="SUPFAM" id="SSF160369">
    <property type="entry name" value="Ribosomal protein L10-like"/>
    <property type="match status" value="1"/>
</dbReference>
<dbReference type="PROSITE" id="PS01109">
    <property type="entry name" value="RIBOSOMAL_L10"/>
    <property type="match status" value="1"/>
</dbReference>
<keyword id="KW-1185">Reference proteome</keyword>
<keyword id="KW-0687">Ribonucleoprotein</keyword>
<keyword id="KW-0689">Ribosomal protein</keyword>
<keyword id="KW-0694">RNA-binding</keyword>
<keyword id="KW-0699">rRNA-binding</keyword>